<comment type="function">
    <text evidence="1">Non-receptor tyrosine-protein kinase found in hematopoietic cells that transmits signals from cell surface receptors and plays an important role in the regulation of innate immune responses, including neutrophil, monocyte, macrophage and mast cell functions, phagocytosis, cell survival and proliferation, cell adhesion and migration. Acts downstream of receptors that bind the Fc region of immunoglobulins, such as FCGR1A and FCGR2A, but also CSF3R, PLAUR, the receptors for IFNG, IL2, IL6 and IL8, and integrins, such as ITGB1 and ITGB2. During the phagocytic process, mediates mobilization of secretory lysosomes, degranulation, and activation of NADPH oxidase to bring about the respiratory burst. Plays a role in the release of inflammatory molecules. Promotes reorganization of the actin cytoskeleton and actin polymerization, formation of podosomes and cell protrusions. Inhibits TP73-mediated transcription activation and TP73-mediated apoptosis. Phosphorylates CBL in response to activation of immunoglobulin gamma Fc region receptors. Phosphorylates ADAM15, BCR, ELMO1, FCGR2A, GAB1, GAB2, RAPGEF1, STAT5B, TP73, VAV1 and WAS (By similarity).</text>
</comment>
<comment type="catalytic activity">
    <reaction evidence="7">
        <text>L-tyrosyl-[protein] + ATP = O-phospho-L-tyrosyl-[protein] + ADP + H(+)</text>
        <dbReference type="Rhea" id="RHEA:10596"/>
        <dbReference type="Rhea" id="RHEA-COMP:10136"/>
        <dbReference type="Rhea" id="RHEA-COMP:20101"/>
        <dbReference type="ChEBI" id="CHEBI:15378"/>
        <dbReference type="ChEBI" id="CHEBI:30616"/>
        <dbReference type="ChEBI" id="CHEBI:46858"/>
        <dbReference type="ChEBI" id="CHEBI:61978"/>
        <dbReference type="ChEBI" id="CHEBI:456216"/>
        <dbReference type="EC" id="2.7.10.2"/>
    </reaction>
</comment>
<comment type="activity regulation">
    <text evidence="1">Subject to autoinhibition, mediated by intramolecular interactions involving the SH2 and SH3 domains. Kinase activity is also regulated by phosphorylation at regulatory tyrosine residues. Phosphorylation at Tyr-389 is required for optimal activity. Phosphorylation at Tyr-500 inhibits kinase activity (By similarity).</text>
</comment>
<comment type="subunit">
    <text evidence="2 3">Interacts with ADAM15. Interacts with FASLG. Interacts with ARRB1 and ARRB2. Interacts with FCGR1A; the interaction may be indirect. Interacts with IL6ST. Interacts (via SH3 domain) with ELMO1. Interacts (via SH3 domain) with TP73. Interacts with YAP1. Interacts with ABL1 and ITGB1, and thereby recruits ABL1 to activated ITGB1. Interacts (via SH2 domain) with FLT3 (tyrosine phosphorylated). Interacts with CBL. Interacts with VAV1, WAS and RAPGEF1. Interacts (via SH3 domain) with WDCP.</text>
</comment>
<comment type="subcellular location">
    <subcellularLocation>
        <location evidence="1">Cytoplasmic vesicle</location>
        <location evidence="1">Secretory vesicle</location>
    </subcellularLocation>
    <subcellularLocation>
        <location evidence="1">Cytoplasm</location>
        <location evidence="1">Cytosol</location>
    </subcellularLocation>
    <subcellularLocation>
        <location>Cell membrane</location>
        <topology>Lipid-anchor</topology>
    </subcellularLocation>
    <subcellularLocation>
        <location evidence="1">Membrane</location>
        <location evidence="1">Caveola</location>
        <topology evidence="1">Lipid-anchor</topology>
    </subcellularLocation>
    <subcellularLocation>
        <location evidence="1">Cell junction</location>
        <location evidence="1">Focal adhesion</location>
    </subcellularLocation>
    <subcellularLocation>
        <location evidence="1">Cytoplasm</location>
        <location evidence="1">Cytoskeleton</location>
    </subcellularLocation>
    <subcellularLocation>
        <location evidence="1">Golgi apparatus</location>
    </subcellularLocation>
    <subcellularLocation>
        <location evidence="1">Cytoplasmic vesicle</location>
    </subcellularLocation>
    <subcellularLocation>
        <location evidence="1">Lysosome</location>
    </subcellularLocation>
    <subcellularLocation>
        <location evidence="1">Nucleus</location>
    </subcellularLocation>
    <text evidence="1">A small fraction is associated with caveolae. Localization at the cell membrane and at caveolae requires palmitoylation at Cys-3. Colocalizes with the actin cytoskeleton at focal adhesions (By similarity).</text>
</comment>
<comment type="PTM">
    <text evidence="1">Phosphorylated on several tyrosine residues. Autophosphorylated. Becomes rapidly phosphorylated upon activation of the immunoglobulin receptors FCGR1A and FCGR2A. Phosphorylation at Tyr-389 increases kinase activity. Phosphorylation at Tyr-500 inhibits kinase activity. Kinase activity is not required for phosphorylation at Tyr-500, suggesting that this site may be a target of other kinases (By similarity).</text>
</comment>
<comment type="PTM">
    <text evidence="1">Ubiquitinated by CBL, leading to its degradation via the proteasome.</text>
</comment>
<comment type="PTM">
    <text evidence="1">Palmitoylation requires prior myristoylation. Palmitoylation is required for caveolar localization (By similarity).</text>
</comment>
<comment type="similarity">
    <text evidence="4">Belongs to the protein kinase superfamily. Tyr protein kinase family. SRC subfamily.</text>
</comment>
<name>HCK_MACFA</name>
<organism>
    <name type="scientific">Macaca fascicularis</name>
    <name type="common">Crab-eating macaque</name>
    <name type="synonym">Cynomolgus monkey</name>
    <dbReference type="NCBI Taxonomy" id="9541"/>
    <lineage>
        <taxon>Eukaryota</taxon>
        <taxon>Metazoa</taxon>
        <taxon>Chordata</taxon>
        <taxon>Craniata</taxon>
        <taxon>Vertebrata</taxon>
        <taxon>Euteleostomi</taxon>
        <taxon>Mammalia</taxon>
        <taxon>Eutheria</taxon>
        <taxon>Euarchontoglires</taxon>
        <taxon>Primates</taxon>
        <taxon>Haplorrhini</taxon>
        <taxon>Catarrhini</taxon>
        <taxon>Cercopithecidae</taxon>
        <taxon>Cercopithecinae</taxon>
        <taxon>Macaca</taxon>
    </lineage>
</organism>
<gene>
    <name type="primary">HCK</name>
</gene>
<sequence>MGCMKSKFLQAGGNTFSKTETSANPHCPVYVPDPTSTIKPGPNSNNRNTPGIGEGSEDIIVVALYDYEAIHHEDLSFQKGDQMVVLEESGEWWKARSLATRKEGYIPSNYVARVDSLETEEWFFKGISRKDAERQLLAPGNMLGSFMIRDSETTKGSYSLSVRDYDPRQGDTVKHYKIRTLDNGGFYISPRSTFSTLQELVDHYKKGSDGLCQKLSVPCVSSKPQKPWEKDAWEIPRESLKLEKKLGAGQFGEVWMATYNKHTKVAVKTMKPGSMSVEAFLAEANLMKTLQHDKLVKLHAVVTKEPIYIITEFMAKGSLLDFLKSDEGSKQPLPKLIDFSAQIAEGMAFIEQRNYIHRDLRAANILVSASLVCKIADFGLARIIEDNEYTAREGAKFPIKWTAPEAINFGSSTIKSDVWSFGILLMEIVTYGRIPYPGMSNPEVIRALERGYRMPRPENCPEELYNIMMRCWKNRPEERPTFEYIQSVLDDFYTATESQYQQQP</sequence>
<proteinExistence type="evidence at transcript level"/>
<feature type="initiator methionine" description="Removed">
    <location>
        <position position="1"/>
    </location>
</feature>
<feature type="chain" id="PRO_0000088103" description="Tyrosine-protein kinase HCK">
    <location>
        <begin position="2"/>
        <end position="504"/>
    </location>
</feature>
<feature type="domain" description="SH3" evidence="6">
    <location>
        <begin position="56"/>
        <end position="116"/>
    </location>
</feature>
<feature type="domain" description="SH2" evidence="5">
    <location>
        <begin position="122"/>
        <end position="219"/>
    </location>
</feature>
<feature type="domain" description="Protein kinase" evidence="4">
    <location>
        <begin position="240"/>
        <end position="493"/>
    </location>
</feature>
<feature type="region of interest" description="Disordered" evidence="8">
    <location>
        <begin position="34"/>
        <end position="53"/>
    </location>
</feature>
<feature type="compositionally biased region" description="Polar residues" evidence="8">
    <location>
        <begin position="34"/>
        <end position="49"/>
    </location>
</feature>
<feature type="active site" description="Proton acceptor" evidence="4 7">
    <location>
        <position position="359"/>
    </location>
</feature>
<feature type="binding site" evidence="4">
    <location>
        <begin position="246"/>
        <end position="254"/>
    </location>
    <ligand>
        <name>ATP</name>
        <dbReference type="ChEBI" id="CHEBI:30616"/>
    </ligand>
</feature>
<feature type="binding site" evidence="4">
    <location>
        <position position="268"/>
    </location>
    <ligand>
        <name>ATP</name>
        <dbReference type="ChEBI" id="CHEBI:30616"/>
    </ligand>
</feature>
<feature type="modified residue" description="Phosphothreonine" evidence="3">
    <location>
        <position position="15"/>
    </location>
</feature>
<feature type="modified residue" description="Phosphotyrosine" evidence="3">
    <location>
        <position position="30"/>
    </location>
</feature>
<feature type="modified residue" description="Phosphothreonine" evidence="3">
    <location>
        <position position="180"/>
    </location>
</feature>
<feature type="modified residue" description="Phosphotyrosine" evidence="2">
    <location>
        <position position="187"/>
    </location>
</feature>
<feature type="modified residue" description="Phosphotyrosine; by autocatalysis" evidence="3">
    <location>
        <position position="389"/>
    </location>
</feature>
<feature type="modified residue" description="Phosphoserine" evidence="3">
    <location>
        <position position="440"/>
    </location>
</feature>
<feature type="modified residue" description="Phosphotyrosine" evidence="3">
    <location>
        <position position="500"/>
    </location>
</feature>
<feature type="lipid moiety-binding region" description="N-myristoyl glycine" evidence="1">
    <location>
        <position position="2"/>
    </location>
</feature>
<feature type="lipid moiety-binding region" description="S-palmitoyl cysteine" evidence="1">
    <location>
        <position position="3"/>
    </location>
</feature>
<protein>
    <recommendedName>
        <fullName>Tyrosine-protein kinase HCK</fullName>
        <ecNumber>2.7.10.2</ecNumber>
    </recommendedName>
    <alternativeName>
        <fullName>Hematopoietic cell kinase</fullName>
    </alternativeName>
    <alternativeName>
        <fullName>Hemopoietic cell kinase</fullName>
    </alternativeName>
    <alternativeName>
        <fullName>p56-HCK</fullName>
    </alternativeName>
</protein>
<keyword id="KW-0067">ATP-binding</keyword>
<keyword id="KW-0965">Cell junction</keyword>
<keyword id="KW-1003">Cell membrane</keyword>
<keyword id="KW-0963">Cytoplasm</keyword>
<keyword id="KW-0968">Cytoplasmic vesicle</keyword>
<keyword id="KW-0206">Cytoskeleton</keyword>
<keyword id="KW-0268">Exocytosis</keyword>
<keyword id="KW-0333">Golgi apparatus</keyword>
<keyword id="KW-0391">Immunity</keyword>
<keyword id="KW-0395">Inflammatory response</keyword>
<keyword id="KW-0399">Innate immunity</keyword>
<keyword id="KW-0418">Kinase</keyword>
<keyword id="KW-0449">Lipoprotein</keyword>
<keyword id="KW-0458">Lysosome</keyword>
<keyword id="KW-0472">Membrane</keyword>
<keyword id="KW-0519">Myristate</keyword>
<keyword id="KW-0547">Nucleotide-binding</keyword>
<keyword id="KW-0539">Nucleus</keyword>
<keyword id="KW-0564">Palmitate</keyword>
<keyword id="KW-0581">Phagocytosis</keyword>
<keyword id="KW-0597">Phosphoprotein</keyword>
<keyword id="KW-0656">Proto-oncogene</keyword>
<keyword id="KW-1185">Reference proteome</keyword>
<keyword id="KW-0727">SH2 domain</keyword>
<keyword id="KW-0728">SH3 domain</keyword>
<keyword id="KW-0808">Transferase</keyword>
<keyword id="KW-0829">Tyrosine-protein kinase</keyword>
<keyword id="KW-0832">Ubl conjugation</keyword>
<reference key="1">
    <citation type="thesis" date="2001" institute="University of Marseille" country="France">
        <authorList>
            <person name="Picard C."/>
        </authorList>
    </citation>
    <scope>NUCLEOTIDE SEQUENCE [MRNA]</scope>
</reference>
<accession>Q95M30</accession>
<evidence type="ECO:0000250" key="1"/>
<evidence type="ECO:0000250" key="2">
    <source>
        <dbReference type="UniProtKB" id="P08103"/>
    </source>
</evidence>
<evidence type="ECO:0000250" key="3">
    <source>
        <dbReference type="UniProtKB" id="P08631"/>
    </source>
</evidence>
<evidence type="ECO:0000255" key="4">
    <source>
        <dbReference type="PROSITE-ProRule" id="PRU00159"/>
    </source>
</evidence>
<evidence type="ECO:0000255" key="5">
    <source>
        <dbReference type="PROSITE-ProRule" id="PRU00191"/>
    </source>
</evidence>
<evidence type="ECO:0000255" key="6">
    <source>
        <dbReference type="PROSITE-ProRule" id="PRU00192"/>
    </source>
</evidence>
<evidence type="ECO:0000255" key="7">
    <source>
        <dbReference type="PROSITE-ProRule" id="PRU10028"/>
    </source>
</evidence>
<evidence type="ECO:0000256" key="8">
    <source>
        <dbReference type="SAM" id="MobiDB-lite"/>
    </source>
</evidence>
<dbReference type="EC" id="2.7.10.2"/>
<dbReference type="EMBL" id="AJ320181">
    <property type="protein sequence ID" value="CAC44031.1"/>
    <property type="molecule type" value="mRNA"/>
</dbReference>
<dbReference type="RefSeq" id="NP_001306372.1">
    <property type="nucleotide sequence ID" value="NM_001319443.1"/>
</dbReference>
<dbReference type="BMRB" id="Q95M30"/>
<dbReference type="SMR" id="Q95M30"/>
<dbReference type="STRING" id="9541.ENSMFAP00000022053"/>
<dbReference type="eggNOG" id="KOG0197">
    <property type="taxonomic scope" value="Eukaryota"/>
</dbReference>
<dbReference type="BRENDA" id="2.7.10.2">
    <property type="organism ID" value="1793"/>
</dbReference>
<dbReference type="Proteomes" id="UP000233100">
    <property type="component" value="Unplaced"/>
</dbReference>
<dbReference type="GO" id="GO:0005901">
    <property type="term" value="C:caveola"/>
    <property type="evidence" value="ECO:0007669"/>
    <property type="project" value="UniProtKB-SubCell"/>
</dbReference>
<dbReference type="GO" id="GO:0009898">
    <property type="term" value="C:cytoplasmic side of plasma membrane"/>
    <property type="evidence" value="ECO:0000250"/>
    <property type="project" value="UniProtKB"/>
</dbReference>
<dbReference type="GO" id="GO:0005856">
    <property type="term" value="C:cytoskeleton"/>
    <property type="evidence" value="ECO:0007669"/>
    <property type="project" value="UniProtKB-SubCell"/>
</dbReference>
<dbReference type="GO" id="GO:0005829">
    <property type="term" value="C:cytosol"/>
    <property type="evidence" value="ECO:0007669"/>
    <property type="project" value="UniProtKB-SubCell"/>
</dbReference>
<dbReference type="GO" id="GO:0005925">
    <property type="term" value="C:focal adhesion"/>
    <property type="evidence" value="ECO:0007669"/>
    <property type="project" value="UniProtKB-SubCell"/>
</dbReference>
<dbReference type="GO" id="GO:0005794">
    <property type="term" value="C:Golgi apparatus"/>
    <property type="evidence" value="ECO:0007669"/>
    <property type="project" value="UniProtKB-SubCell"/>
</dbReference>
<dbReference type="GO" id="GO:0005764">
    <property type="term" value="C:lysosome"/>
    <property type="evidence" value="ECO:0000250"/>
    <property type="project" value="UniProtKB"/>
</dbReference>
<dbReference type="GO" id="GO:0005634">
    <property type="term" value="C:nucleus"/>
    <property type="evidence" value="ECO:0007669"/>
    <property type="project" value="UniProtKB-SubCell"/>
</dbReference>
<dbReference type="GO" id="GO:0030133">
    <property type="term" value="C:transport vesicle"/>
    <property type="evidence" value="ECO:0007669"/>
    <property type="project" value="UniProtKB-SubCell"/>
</dbReference>
<dbReference type="GO" id="GO:0005524">
    <property type="term" value="F:ATP binding"/>
    <property type="evidence" value="ECO:0007669"/>
    <property type="project" value="UniProtKB-KW"/>
</dbReference>
<dbReference type="GO" id="GO:0004715">
    <property type="term" value="F:non-membrane spanning protein tyrosine kinase activity"/>
    <property type="evidence" value="ECO:0007669"/>
    <property type="project" value="UniProtKB-EC"/>
</dbReference>
<dbReference type="GO" id="GO:0004713">
    <property type="term" value="F:protein tyrosine kinase activity"/>
    <property type="evidence" value="ECO:0000250"/>
    <property type="project" value="UniProtKB"/>
</dbReference>
<dbReference type="GO" id="GO:0006887">
    <property type="term" value="P:exocytosis"/>
    <property type="evidence" value="ECO:0007669"/>
    <property type="project" value="UniProtKB-KW"/>
</dbReference>
<dbReference type="GO" id="GO:0006954">
    <property type="term" value="P:inflammatory response"/>
    <property type="evidence" value="ECO:0007669"/>
    <property type="project" value="UniProtKB-KW"/>
</dbReference>
<dbReference type="GO" id="GO:0045087">
    <property type="term" value="P:innate immune response"/>
    <property type="evidence" value="ECO:0007669"/>
    <property type="project" value="UniProtKB-KW"/>
</dbReference>
<dbReference type="GO" id="GO:0018108">
    <property type="term" value="P:peptidyl-tyrosine phosphorylation"/>
    <property type="evidence" value="ECO:0000250"/>
    <property type="project" value="UniProtKB"/>
</dbReference>
<dbReference type="GO" id="GO:0006909">
    <property type="term" value="P:phagocytosis"/>
    <property type="evidence" value="ECO:0007669"/>
    <property type="project" value="UniProtKB-KW"/>
</dbReference>
<dbReference type="GO" id="GO:0008284">
    <property type="term" value="P:positive regulation of cell population proliferation"/>
    <property type="evidence" value="ECO:0000250"/>
    <property type="project" value="UniProtKB"/>
</dbReference>
<dbReference type="GO" id="GO:0046777">
    <property type="term" value="P:protein autophosphorylation"/>
    <property type="evidence" value="ECO:0000250"/>
    <property type="project" value="UniProtKB"/>
</dbReference>
<dbReference type="GO" id="GO:0032956">
    <property type="term" value="P:regulation of actin cytoskeleton organization"/>
    <property type="evidence" value="ECO:0000250"/>
    <property type="project" value="UniProtKB"/>
</dbReference>
<dbReference type="GO" id="GO:0008360">
    <property type="term" value="P:regulation of cell shape"/>
    <property type="evidence" value="ECO:0000250"/>
    <property type="project" value="UniProtKB"/>
</dbReference>
<dbReference type="GO" id="GO:0050764">
    <property type="term" value="P:regulation of phagocytosis"/>
    <property type="evidence" value="ECO:0000250"/>
    <property type="project" value="UniProtKB"/>
</dbReference>
<dbReference type="GO" id="GO:0071801">
    <property type="term" value="P:regulation of podosome assembly"/>
    <property type="evidence" value="ECO:0000250"/>
    <property type="project" value="UniProtKB"/>
</dbReference>
<dbReference type="CDD" id="cd10363">
    <property type="entry name" value="SH2_Src_HCK"/>
    <property type="match status" value="1"/>
</dbReference>
<dbReference type="FunFam" id="1.10.510.10:FF:000553">
    <property type="entry name" value="Tyrosine-protein kinase"/>
    <property type="match status" value="1"/>
</dbReference>
<dbReference type="FunFam" id="2.30.30.40:FF:000095">
    <property type="entry name" value="Tyrosine-protein kinase"/>
    <property type="match status" value="1"/>
</dbReference>
<dbReference type="FunFam" id="3.30.200.20:FF:000036">
    <property type="entry name" value="Tyrosine-protein kinase"/>
    <property type="match status" value="1"/>
</dbReference>
<dbReference type="FunFam" id="3.30.505.10:FF:000010">
    <property type="entry name" value="Tyrosine-protein kinase"/>
    <property type="match status" value="1"/>
</dbReference>
<dbReference type="Gene3D" id="3.30.200.20">
    <property type="entry name" value="Phosphorylase Kinase, domain 1"/>
    <property type="match status" value="1"/>
</dbReference>
<dbReference type="Gene3D" id="3.30.505.10">
    <property type="entry name" value="SH2 domain"/>
    <property type="match status" value="1"/>
</dbReference>
<dbReference type="Gene3D" id="2.30.30.40">
    <property type="entry name" value="SH3 Domains"/>
    <property type="match status" value="1"/>
</dbReference>
<dbReference type="Gene3D" id="1.10.510.10">
    <property type="entry name" value="Transferase(Phosphotransferase) domain 1"/>
    <property type="match status" value="1"/>
</dbReference>
<dbReference type="InterPro" id="IPR035851">
    <property type="entry name" value="HCK_SH2"/>
</dbReference>
<dbReference type="InterPro" id="IPR011009">
    <property type="entry name" value="Kinase-like_dom_sf"/>
</dbReference>
<dbReference type="InterPro" id="IPR050198">
    <property type="entry name" value="Non-receptor_tyrosine_kinases"/>
</dbReference>
<dbReference type="InterPro" id="IPR000719">
    <property type="entry name" value="Prot_kinase_dom"/>
</dbReference>
<dbReference type="InterPro" id="IPR017441">
    <property type="entry name" value="Protein_kinase_ATP_BS"/>
</dbReference>
<dbReference type="InterPro" id="IPR001245">
    <property type="entry name" value="Ser-Thr/Tyr_kinase_cat_dom"/>
</dbReference>
<dbReference type="InterPro" id="IPR000980">
    <property type="entry name" value="SH2"/>
</dbReference>
<dbReference type="InterPro" id="IPR036860">
    <property type="entry name" value="SH2_dom_sf"/>
</dbReference>
<dbReference type="InterPro" id="IPR036028">
    <property type="entry name" value="SH3-like_dom_sf"/>
</dbReference>
<dbReference type="InterPro" id="IPR001452">
    <property type="entry name" value="SH3_domain"/>
</dbReference>
<dbReference type="InterPro" id="IPR008266">
    <property type="entry name" value="Tyr_kinase_AS"/>
</dbReference>
<dbReference type="InterPro" id="IPR020635">
    <property type="entry name" value="Tyr_kinase_cat_dom"/>
</dbReference>
<dbReference type="PANTHER" id="PTHR24418">
    <property type="entry name" value="TYROSINE-PROTEIN KINASE"/>
    <property type="match status" value="1"/>
</dbReference>
<dbReference type="Pfam" id="PF07714">
    <property type="entry name" value="PK_Tyr_Ser-Thr"/>
    <property type="match status" value="1"/>
</dbReference>
<dbReference type="Pfam" id="PF00017">
    <property type="entry name" value="SH2"/>
    <property type="match status" value="1"/>
</dbReference>
<dbReference type="Pfam" id="PF00018">
    <property type="entry name" value="SH3_1"/>
    <property type="match status" value="1"/>
</dbReference>
<dbReference type="PRINTS" id="PR00401">
    <property type="entry name" value="SH2DOMAIN"/>
</dbReference>
<dbReference type="PRINTS" id="PR00452">
    <property type="entry name" value="SH3DOMAIN"/>
</dbReference>
<dbReference type="PRINTS" id="PR00109">
    <property type="entry name" value="TYRKINASE"/>
</dbReference>
<dbReference type="SMART" id="SM00252">
    <property type="entry name" value="SH2"/>
    <property type="match status" value="1"/>
</dbReference>
<dbReference type="SMART" id="SM00326">
    <property type="entry name" value="SH3"/>
    <property type="match status" value="1"/>
</dbReference>
<dbReference type="SMART" id="SM00219">
    <property type="entry name" value="TyrKc"/>
    <property type="match status" value="1"/>
</dbReference>
<dbReference type="SUPFAM" id="SSF56112">
    <property type="entry name" value="Protein kinase-like (PK-like)"/>
    <property type="match status" value="1"/>
</dbReference>
<dbReference type="SUPFAM" id="SSF55550">
    <property type="entry name" value="SH2 domain"/>
    <property type="match status" value="1"/>
</dbReference>
<dbReference type="SUPFAM" id="SSF50044">
    <property type="entry name" value="SH3-domain"/>
    <property type="match status" value="1"/>
</dbReference>
<dbReference type="PROSITE" id="PS00107">
    <property type="entry name" value="PROTEIN_KINASE_ATP"/>
    <property type="match status" value="1"/>
</dbReference>
<dbReference type="PROSITE" id="PS50011">
    <property type="entry name" value="PROTEIN_KINASE_DOM"/>
    <property type="match status" value="1"/>
</dbReference>
<dbReference type="PROSITE" id="PS00109">
    <property type="entry name" value="PROTEIN_KINASE_TYR"/>
    <property type="match status" value="1"/>
</dbReference>
<dbReference type="PROSITE" id="PS50001">
    <property type="entry name" value="SH2"/>
    <property type="match status" value="1"/>
</dbReference>
<dbReference type="PROSITE" id="PS50002">
    <property type="entry name" value="SH3"/>
    <property type="match status" value="1"/>
</dbReference>